<sequence length="406" mass="44277">MRGGLWQLGQSITRRLAQADKKTIGRRCFASDADLKKTVLYDFHVVNGGKMVPFAGWSMPIQYKDSIMDSTVNCRENGSLFDVSHMCGLSLKGKDTIPFLEKLVIADVAGLAPGTGSLTVFTNEKGGAIDDSVVTKVTNDHIYLVVNAGCRDKDLAHIEEHMKSFKSKGGDVSWHIHDERSLLALQGPLAAPVLQYLTKDDLSKMYFGEFRVLDINGAPCFLTRTGYTGEDGFEISVPSENALDLAKALLEKSEGKIRLTGLGARDSLRLEAGLCLYGNDMEQHTTPVEAGLTWAIGKRRRAEGGFLGAEVILKQIEEGPKIRRVGFFSSGPPPRSHSEIQDSNGQNIGEITSGGFSPCLKKNIAMGYVKTGNHKAGTNVKIVIRGKSYDGVVTKMPFVPTKYYKP</sequence>
<keyword id="KW-0032">Aminotransferase</keyword>
<keyword id="KW-0496">Mitochondrion</keyword>
<keyword id="KW-1185">Reference proteome</keyword>
<keyword id="KW-0808">Transferase</keyword>
<keyword id="KW-0809">Transit peptide</keyword>
<feature type="transit peptide" description="Mitochondrion" evidence="1">
    <location>
        <begin position="1"/>
        <end position="29"/>
    </location>
</feature>
<feature type="chain" id="PRO_0000010764" description="Aminomethyltransferase, mitochondrial">
    <location>
        <begin position="30"/>
        <end position="406"/>
    </location>
</feature>
<feature type="binding site" evidence="1">
    <location>
        <position position="234"/>
    </location>
    <ligand>
        <name>substrate</name>
    </ligand>
</feature>
<feature type="binding site" evidence="1">
    <location>
        <position position="265"/>
    </location>
    <ligand>
        <name>substrate</name>
    </ligand>
</feature>
<feature type="binding site" evidence="1">
    <location>
        <position position="403"/>
    </location>
    <ligand>
        <name>substrate</name>
    </ligand>
</feature>
<protein>
    <recommendedName>
        <fullName>Aminomethyltransferase, mitochondrial</fullName>
        <ecNumber>2.1.2.10</ecNumber>
    </recommendedName>
    <alternativeName>
        <fullName>Glycine cleavage system T protein</fullName>
        <shortName>GCVT</shortName>
    </alternativeName>
</protein>
<accession>P54260</accession>
<gene>
    <name type="primary">GDCST</name>
</gene>
<name>GCST_SOLTU</name>
<reference key="1">
    <citation type="journal article" date="1994" name="Plant Physiol.">
        <title>T-protein of glycine decarboxylase from Solanum tuberosum.</title>
        <authorList>
            <person name="Kopriva S."/>
            <person name="Bauwe H."/>
        </authorList>
    </citation>
    <scope>NUCLEOTIDE SEQUENCE [MRNA]</scope>
    <source>
        <tissue>Leaf</tissue>
    </source>
</reference>
<evidence type="ECO:0000250" key="1"/>
<evidence type="ECO:0000305" key="2"/>
<dbReference type="EC" id="2.1.2.10"/>
<dbReference type="EMBL" id="Z25862">
    <property type="protein sequence ID" value="CAA81081.1"/>
    <property type="molecule type" value="mRNA"/>
</dbReference>
<dbReference type="PIR" id="S59948">
    <property type="entry name" value="S59948"/>
</dbReference>
<dbReference type="RefSeq" id="NP_001275291.1">
    <property type="nucleotide sequence ID" value="NM_001288362.1"/>
</dbReference>
<dbReference type="SMR" id="P54260"/>
<dbReference type="FunCoup" id="P54260">
    <property type="interactions" value="1649"/>
</dbReference>
<dbReference type="IntAct" id="P54260">
    <property type="interactions" value="1"/>
</dbReference>
<dbReference type="STRING" id="4113.P54260"/>
<dbReference type="PaxDb" id="4113-PGSC0003DMT400042406"/>
<dbReference type="ProMEX" id="P54260"/>
<dbReference type="GeneID" id="102602939"/>
<dbReference type="KEGG" id="sot:102602939"/>
<dbReference type="eggNOG" id="KOG2770">
    <property type="taxonomic scope" value="Eukaryota"/>
</dbReference>
<dbReference type="InParanoid" id="P54260"/>
<dbReference type="OrthoDB" id="10263536at2759"/>
<dbReference type="Proteomes" id="UP000011115">
    <property type="component" value="Unassembled WGS sequence"/>
</dbReference>
<dbReference type="ExpressionAtlas" id="P54260">
    <property type="expression patterns" value="baseline"/>
</dbReference>
<dbReference type="GO" id="GO:0005960">
    <property type="term" value="C:glycine cleavage complex"/>
    <property type="evidence" value="ECO:0007669"/>
    <property type="project" value="InterPro"/>
</dbReference>
<dbReference type="GO" id="GO:0005739">
    <property type="term" value="C:mitochondrion"/>
    <property type="evidence" value="ECO:0000318"/>
    <property type="project" value="GO_Central"/>
</dbReference>
<dbReference type="GO" id="GO:0004047">
    <property type="term" value="F:aminomethyltransferase activity"/>
    <property type="evidence" value="ECO:0007669"/>
    <property type="project" value="UniProtKB-EC"/>
</dbReference>
<dbReference type="GO" id="GO:0008483">
    <property type="term" value="F:transaminase activity"/>
    <property type="evidence" value="ECO:0007669"/>
    <property type="project" value="UniProtKB-KW"/>
</dbReference>
<dbReference type="GO" id="GO:0006546">
    <property type="term" value="P:glycine catabolic process"/>
    <property type="evidence" value="ECO:0007669"/>
    <property type="project" value="InterPro"/>
</dbReference>
<dbReference type="FunFam" id="2.40.30.110:FF:000002">
    <property type="entry name" value="Aminomethyltransferase"/>
    <property type="match status" value="1"/>
</dbReference>
<dbReference type="FunFam" id="3.30.1360.120:FF:000014">
    <property type="entry name" value="Aminomethyltransferase"/>
    <property type="match status" value="1"/>
</dbReference>
<dbReference type="FunFam" id="3.30.70.1400:FF:000001">
    <property type="entry name" value="Aminomethyltransferase"/>
    <property type="match status" value="1"/>
</dbReference>
<dbReference type="FunFam" id="4.10.1250.10:FF:000002">
    <property type="entry name" value="Aminomethyltransferase"/>
    <property type="match status" value="1"/>
</dbReference>
<dbReference type="Gene3D" id="2.40.30.110">
    <property type="entry name" value="Aminomethyltransferase beta-barrel domains"/>
    <property type="match status" value="1"/>
</dbReference>
<dbReference type="Gene3D" id="3.30.70.1400">
    <property type="entry name" value="Aminomethyltransferase beta-barrel domains"/>
    <property type="match status" value="1"/>
</dbReference>
<dbReference type="Gene3D" id="4.10.1250.10">
    <property type="entry name" value="Aminomethyltransferase fragment"/>
    <property type="match status" value="1"/>
</dbReference>
<dbReference type="Gene3D" id="3.30.1360.120">
    <property type="entry name" value="Probable tRNA modification gtpase trme, domain 1"/>
    <property type="match status" value="1"/>
</dbReference>
<dbReference type="InterPro" id="IPR006223">
    <property type="entry name" value="GCS_T"/>
</dbReference>
<dbReference type="InterPro" id="IPR013977">
    <property type="entry name" value="GCST_C"/>
</dbReference>
<dbReference type="InterPro" id="IPR006222">
    <property type="entry name" value="GCV_T_N"/>
</dbReference>
<dbReference type="InterPro" id="IPR028896">
    <property type="entry name" value="GcvT/YgfZ/DmdA"/>
</dbReference>
<dbReference type="InterPro" id="IPR029043">
    <property type="entry name" value="GcvT/YgfZ_C"/>
</dbReference>
<dbReference type="InterPro" id="IPR027266">
    <property type="entry name" value="TrmE/GcvT_dom1"/>
</dbReference>
<dbReference type="NCBIfam" id="TIGR00528">
    <property type="entry name" value="gcvT"/>
    <property type="match status" value="1"/>
</dbReference>
<dbReference type="NCBIfam" id="NF001567">
    <property type="entry name" value="PRK00389.1"/>
    <property type="match status" value="1"/>
</dbReference>
<dbReference type="PANTHER" id="PTHR43757">
    <property type="entry name" value="AMINOMETHYLTRANSFERASE"/>
    <property type="match status" value="1"/>
</dbReference>
<dbReference type="PANTHER" id="PTHR43757:SF2">
    <property type="entry name" value="AMINOMETHYLTRANSFERASE, MITOCHONDRIAL"/>
    <property type="match status" value="1"/>
</dbReference>
<dbReference type="Pfam" id="PF01571">
    <property type="entry name" value="GCV_T"/>
    <property type="match status" value="1"/>
</dbReference>
<dbReference type="Pfam" id="PF08669">
    <property type="entry name" value="GCV_T_C"/>
    <property type="match status" value="1"/>
</dbReference>
<dbReference type="PIRSF" id="PIRSF006487">
    <property type="entry name" value="GcvT"/>
    <property type="match status" value="1"/>
</dbReference>
<dbReference type="SUPFAM" id="SSF101790">
    <property type="entry name" value="Aminomethyltransferase beta-barrel domain"/>
    <property type="match status" value="1"/>
</dbReference>
<dbReference type="SUPFAM" id="SSF103025">
    <property type="entry name" value="Folate-binding domain"/>
    <property type="match status" value="1"/>
</dbReference>
<proteinExistence type="evidence at transcript level"/>
<organism>
    <name type="scientific">Solanum tuberosum</name>
    <name type="common">Potato</name>
    <dbReference type="NCBI Taxonomy" id="4113"/>
    <lineage>
        <taxon>Eukaryota</taxon>
        <taxon>Viridiplantae</taxon>
        <taxon>Streptophyta</taxon>
        <taxon>Embryophyta</taxon>
        <taxon>Tracheophyta</taxon>
        <taxon>Spermatophyta</taxon>
        <taxon>Magnoliopsida</taxon>
        <taxon>eudicotyledons</taxon>
        <taxon>Gunneridae</taxon>
        <taxon>Pentapetalae</taxon>
        <taxon>asterids</taxon>
        <taxon>lamiids</taxon>
        <taxon>Solanales</taxon>
        <taxon>Solanaceae</taxon>
        <taxon>Solanoideae</taxon>
        <taxon>Solaneae</taxon>
        <taxon>Solanum</taxon>
    </lineage>
</organism>
<comment type="function">
    <text>The glycine cleavage system catalyzes the degradation of glycine.</text>
</comment>
<comment type="catalytic activity">
    <reaction>
        <text>N(6)-[(R)-S(8)-aminomethyldihydrolipoyl]-L-lysyl-[protein] + (6S)-5,6,7,8-tetrahydrofolate = N(6)-[(R)-dihydrolipoyl]-L-lysyl-[protein] + (6R)-5,10-methylene-5,6,7,8-tetrahydrofolate + NH4(+)</text>
        <dbReference type="Rhea" id="RHEA:16945"/>
        <dbReference type="Rhea" id="RHEA-COMP:10475"/>
        <dbReference type="Rhea" id="RHEA-COMP:10492"/>
        <dbReference type="ChEBI" id="CHEBI:15636"/>
        <dbReference type="ChEBI" id="CHEBI:28938"/>
        <dbReference type="ChEBI" id="CHEBI:57453"/>
        <dbReference type="ChEBI" id="CHEBI:83100"/>
        <dbReference type="ChEBI" id="CHEBI:83143"/>
        <dbReference type="EC" id="2.1.2.10"/>
    </reaction>
</comment>
<comment type="subunit">
    <text>The glycine cleavage system is composed of four proteins: P, T, L and H.</text>
</comment>
<comment type="subcellular location">
    <subcellularLocation>
        <location>Mitochondrion</location>
    </subcellularLocation>
</comment>
<comment type="similarity">
    <text evidence="2">Belongs to the GcvT family.</text>
</comment>